<name>NUOC_NOCFA</name>
<organism>
    <name type="scientific">Nocardia farcinica (strain IFM 10152)</name>
    <dbReference type="NCBI Taxonomy" id="247156"/>
    <lineage>
        <taxon>Bacteria</taxon>
        <taxon>Bacillati</taxon>
        <taxon>Actinomycetota</taxon>
        <taxon>Actinomycetes</taxon>
        <taxon>Mycobacteriales</taxon>
        <taxon>Nocardiaceae</taxon>
        <taxon>Nocardia</taxon>
    </lineage>
</organism>
<keyword id="KW-1003">Cell membrane</keyword>
<keyword id="KW-0472">Membrane</keyword>
<keyword id="KW-0520">NAD</keyword>
<keyword id="KW-0874">Quinone</keyword>
<keyword id="KW-1185">Reference proteome</keyword>
<keyword id="KW-1278">Translocase</keyword>
<keyword id="KW-0813">Transport</keyword>
<accession>Q5YWC9</accession>
<proteinExistence type="inferred from homology"/>
<dbReference type="EC" id="7.1.1.-" evidence="1"/>
<dbReference type="EMBL" id="AP006618">
    <property type="protein sequence ID" value="BAD57512.1"/>
    <property type="molecule type" value="Genomic_DNA"/>
</dbReference>
<dbReference type="RefSeq" id="WP_011209197.1">
    <property type="nucleotide sequence ID" value="NC_006361.1"/>
</dbReference>
<dbReference type="SMR" id="Q5YWC9"/>
<dbReference type="STRING" id="247156.NFA_26650"/>
<dbReference type="GeneID" id="61133406"/>
<dbReference type="KEGG" id="nfa:NFA_26650"/>
<dbReference type="eggNOG" id="COG0852">
    <property type="taxonomic scope" value="Bacteria"/>
</dbReference>
<dbReference type="HOGENOM" id="CLU_042628_4_0_11"/>
<dbReference type="OrthoDB" id="9803286at2"/>
<dbReference type="Proteomes" id="UP000006820">
    <property type="component" value="Chromosome"/>
</dbReference>
<dbReference type="GO" id="GO:0005886">
    <property type="term" value="C:plasma membrane"/>
    <property type="evidence" value="ECO:0007669"/>
    <property type="project" value="UniProtKB-SubCell"/>
</dbReference>
<dbReference type="GO" id="GO:0008137">
    <property type="term" value="F:NADH dehydrogenase (ubiquinone) activity"/>
    <property type="evidence" value="ECO:0007669"/>
    <property type="project" value="InterPro"/>
</dbReference>
<dbReference type="GO" id="GO:0050136">
    <property type="term" value="F:NADH:ubiquinone reductase (non-electrogenic) activity"/>
    <property type="evidence" value="ECO:0007669"/>
    <property type="project" value="UniProtKB-UniRule"/>
</dbReference>
<dbReference type="GO" id="GO:0048038">
    <property type="term" value="F:quinone binding"/>
    <property type="evidence" value="ECO:0007669"/>
    <property type="project" value="UniProtKB-KW"/>
</dbReference>
<dbReference type="Gene3D" id="3.30.460.80">
    <property type="entry name" value="NADH:ubiquinone oxidoreductase, 30kDa subunit"/>
    <property type="match status" value="1"/>
</dbReference>
<dbReference type="HAMAP" id="MF_01357">
    <property type="entry name" value="NDH1_NuoC"/>
    <property type="match status" value="1"/>
</dbReference>
<dbReference type="InterPro" id="IPR010218">
    <property type="entry name" value="NADH_DH_suC"/>
</dbReference>
<dbReference type="InterPro" id="IPR037232">
    <property type="entry name" value="NADH_quin_OxRdtase_su_C/D-like"/>
</dbReference>
<dbReference type="InterPro" id="IPR001268">
    <property type="entry name" value="NADH_UbQ_OxRdtase_30kDa_su"/>
</dbReference>
<dbReference type="NCBIfam" id="TIGR01961">
    <property type="entry name" value="NuoC_fam"/>
    <property type="match status" value="1"/>
</dbReference>
<dbReference type="NCBIfam" id="NF005856">
    <property type="entry name" value="PRK07785.1"/>
    <property type="match status" value="1"/>
</dbReference>
<dbReference type="PANTHER" id="PTHR10884:SF14">
    <property type="entry name" value="NADH DEHYDROGENASE [UBIQUINONE] IRON-SULFUR PROTEIN 3, MITOCHONDRIAL"/>
    <property type="match status" value="1"/>
</dbReference>
<dbReference type="PANTHER" id="PTHR10884">
    <property type="entry name" value="NADH DEHYDROGENASE UBIQUINONE IRON-SULFUR PROTEIN 3"/>
    <property type="match status" value="1"/>
</dbReference>
<dbReference type="Pfam" id="PF00329">
    <property type="entry name" value="Complex1_30kDa"/>
    <property type="match status" value="1"/>
</dbReference>
<dbReference type="SUPFAM" id="SSF143243">
    <property type="entry name" value="Nqo5-like"/>
    <property type="match status" value="1"/>
</dbReference>
<protein>
    <recommendedName>
        <fullName evidence="1">NADH-quinone oxidoreductase subunit C</fullName>
        <ecNumber evidence="1">7.1.1.-</ecNumber>
    </recommendedName>
    <alternativeName>
        <fullName evidence="1">NADH dehydrogenase I subunit C</fullName>
    </alternativeName>
    <alternativeName>
        <fullName evidence="1">NDH-1 subunit C</fullName>
    </alternativeName>
</protein>
<reference key="1">
    <citation type="journal article" date="2004" name="Proc. Natl. Acad. Sci. U.S.A.">
        <title>The complete genomic sequence of Nocardia farcinica IFM 10152.</title>
        <authorList>
            <person name="Ishikawa J."/>
            <person name="Yamashita A."/>
            <person name="Mikami Y."/>
            <person name="Hoshino Y."/>
            <person name="Kurita H."/>
            <person name="Hotta K."/>
            <person name="Shiba T."/>
            <person name="Hattori M."/>
        </authorList>
    </citation>
    <scope>NUCLEOTIDE SEQUENCE [LARGE SCALE GENOMIC DNA]</scope>
    <source>
        <strain>IFM 10152</strain>
    </source>
</reference>
<gene>
    <name evidence="1" type="primary">nuoC</name>
    <name type="ordered locus">NFA_26650</name>
</gene>
<evidence type="ECO:0000255" key="1">
    <source>
        <dbReference type="HAMAP-Rule" id="MF_01357"/>
    </source>
</evidence>
<evidence type="ECO:0000256" key="2">
    <source>
        <dbReference type="SAM" id="MobiDB-lite"/>
    </source>
</evidence>
<sequence length="253" mass="27984">MSPDTPRGGDLHPPEPDAAATAGPEGTPPDTEPAAEVIGVRHGMFGIRGTGDTSGYGRLVRPVTLPGGTAPPYGGWFDEVVDRLRTALENSGTPFGSALEKIVVFRGELTLHVRREHLVTVARLLRDDPALRFELCLGVNGVHYPDDAGRELHAVYPLRSITHNRLLRVETCAPDTDPHIPSLFEVYPTTDWHERETYDFFGILFDGHPSLTRITMPDDWRGHPQRKDYPLGGIPVEYKGARIPPPDERRAYS</sequence>
<comment type="function">
    <text evidence="1">NDH-1 shuttles electrons from NADH, via FMN and iron-sulfur (Fe-S) centers, to quinones in the respiratory chain. The immediate electron acceptor for the enzyme in this species is believed to be a menaquinone. Couples the redox reaction to proton translocation (for every two electrons transferred, four hydrogen ions are translocated across the cytoplasmic membrane), and thus conserves the redox energy in a proton gradient.</text>
</comment>
<comment type="catalytic activity">
    <reaction evidence="1">
        <text>a quinone + NADH + 5 H(+)(in) = a quinol + NAD(+) + 4 H(+)(out)</text>
        <dbReference type="Rhea" id="RHEA:57888"/>
        <dbReference type="ChEBI" id="CHEBI:15378"/>
        <dbReference type="ChEBI" id="CHEBI:24646"/>
        <dbReference type="ChEBI" id="CHEBI:57540"/>
        <dbReference type="ChEBI" id="CHEBI:57945"/>
        <dbReference type="ChEBI" id="CHEBI:132124"/>
    </reaction>
</comment>
<comment type="subunit">
    <text evidence="1">NDH-1 is composed of 14 different subunits. Subunits NuoB, C, D, E, F, and G constitute the peripheral sector of the complex.</text>
</comment>
<comment type="subcellular location">
    <subcellularLocation>
        <location evidence="1">Cell membrane</location>
        <topology evidence="1">Peripheral membrane protein</topology>
        <orientation evidence="1">Cytoplasmic side</orientation>
    </subcellularLocation>
</comment>
<comment type="similarity">
    <text evidence="1">Belongs to the complex I 30 kDa subunit family.</text>
</comment>
<feature type="chain" id="PRO_0000358153" description="NADH-quinone oxidoreductase subunit C">
    <location>
        <begin position="1"/>
        <end position="253"/>
    </location>
</feature>
<feature type="region of interest" description="Disordered" evidence="2">
    <location>
        <begin position="1"/>
        <end position="33"/>
    </location>
</feature>
<feature type="region of interest" description="Disordered" evidence="2">
    <location>
        <begin position="234"/>
        <end position="253"/>
    </location>
</feature>